<feature type="chain" id="PRO_0000358350" description="NADH-quinone oxidoreductase subunit B">
    <location>
        <begin position="1"/>
        <end position="158"/>
    </location>
</feature>
<feature type="binding site" evidence="2">
    <location>
        <position position="37"/>
    </location>
    <ligand>
        <name>[4Fe-4S] cluster</name>
        <dbReference type="ChEBI" id="CHEBI:49883"/>
    </ligand>
</feature>
<feature type="binding site" evidence="2">
    <location>
        <position position="38"/>
    </location>
    <ligand>
        <name>[4Fe-4S] cluster</name>
        <dbReference type="ChEBI" id="CHEBI:49883"/>
    </ligand>
</feature>
<feature type="binding site" evidence="2">
    <location>
        <position position="102"/>
    </location>
    <ligand>
        <name>[4Fe-4S] cluster</name>
        <dbReference type="ChEBI" id="CHEBI:49883"/>
    </ligand>
</feature>
<feature type="binding site" evidence="2">
    <location>
        <position position="132"/>
    </location>
    <ligand>
        <name>[4Fe-4S] cluster</name>
        <dbReference type="ChEBI" id="CHEBI:49883"/>
    </ligand>
</feature>
<dbReference type="EC" id="7.1.1.-" evidence="2"/>
<dbReference type="EMBL" id="AM167904">
    <property type="protein sequence ID" value="CAJ48652.1"/>
    <property type="molecule type" value="Genomic_DNA"/>
</dbReference>
<dbReference type="RefSeq" id="WP_005012021.1">
    <property type="nucleotide sequence ID" value="NC_010645.1"/>
</dbReference>
<dbReference type="SMR" id="Q2KV17"/>
<dbReference type="STRING" id="360910.BAV1043"/>
<dbReference type="KEGG" id="bav:BAV1043"/>
<dbReference type="eggNOG" id="COG0377">
    <property type="taxonomic scope" value="Bacteria"/>
</dbReference>
<dbReference type="HOGENOM" id="CLU_055737_7_3_4"/>
<dbReference type="OrthoDB" id="9786737at2"/>
<dbReference type="Proteomes" id="UP000001977">
    <property type="component" value="Chromosome"/>
</dbReference>
<dbReference type="GO" id="GO:0005886">
    <property type="term" value="C:plasma membrane"/>
    <property type="evidence" value="ECO:0007669"/>
    <property type="project" value="UniProtKB-SubCell"/>
</dbReference>
<dbReference type="GO" id="GO:0045271">
    <property type="term" value="C:respiratory chain complex I"/>
    <property type="evidence" value="ECO:0007669"/>
    <property type="project" value="TreeGrafter"/>
</dbReference>
<dbReference type="GO" id="GO:0051539">
    <property type="term" value="F:4 iron, 4 sulfur cluster binding"/>
    <property type="evidence" value="ECO:0007669"/>
    <property type="project" value="UniProtKB-KW"/>
</dbReference>
<dbReference type="GO" id="GO:0005506">
    <property type="term" value="F:iron ion binding"/>
    <property type="evidence" value="ECO:0007669"/>
    <property type="project" value="UniProtKB-UniRule"/>
</dbReference>
<dbReference type="GO" id="GO:0008137">
    <property type="term" value="F:NADH dehydrogenase (ubiquinone) activity"/>
    <property type="evidence" value="ECO:0007669"/>
    <property type="project" value="InterPro"/>
</dbReference>
<dbReference type="GO" id="GO:0050136">
    <property type="term" value="F:NADH:ubiquinone reductase (non-electrogenic) activity"/>
    <property type="evidence" value="ECO:0007669"/>
    <property type="project" value="UniProtKB-UniRule"/>
</dbReference>
<dbReference type="GO" id="GO:0048038">
    <property type="term" value="F:quinone binding"/>
    <property type="evidence" value="ECO:0007669"/>
    <property type="project" value="UniProtKB-KW"/>
</dbReference>
<dbReference type="GO" id="GO:0009060">
    <property type="term" value="P:aerobic respiration"/>
    <property type="evidence" value="ECO:0007669"/>
    <property type="project" value="TreeGrafter"/>
</dbReference>
<dbReference type="GO" id="GO:0015990">
    <property type="term" value="P:electron transport coupled proton transport"/>
    <property type="evidence" value="ECO:0007669"/>
    <property type="project" value="TreeGrafter"/>
</dbReference>
<dbReference type="FunFam" id="3.40.50.12280:FF:000001">
    <property type="entry name" value="NADH-quinone oxidoreductase subunit B 2"/>
    <property type="match status" value="1"/>
</dbReference>
<dbReference type="Gene3D" id="3.40.50.12280">
    <property type="match status" value="1"/>
</dbReference>
<dbReference type="HAMAP" id="MF_01356">
    <property type="entry name" value="NDH1_NuoB"/>
    <property type="match status" value="1"/>
</dbReference>
<dbReference type="InterPro" id="IPR006137">
    <property type="entry name" value="NADH_UbQ_OxRdtase-like_20kDa"/>
</dbReference>
<dbReference type="InterPro" id="IPR006138">
    <property type="entry name" value="NADH_UQ_OxRdtase_20Kd_su"/>
</dbReference>
<dbReference type="NCBIfam" id="TIGR01957">
    <property type="entry name" value="nuoB_fam"/>
    <property type="match status" value="1"/>
</dbReference>
<dbReference type="NCBIfam" id="NF005012">
    <property type="entry name" value="PRK06411.1"/>
    <property type="match status" value="1"/>
</dbReference>
<dbReference type="PANTHER" id="PTHR11995">
    <property type="entry name" value="NADH DEHYDROGENASE"/>
    <property type="match status" value="1"/>
</dbReference>
<dbReference type="PANTHER" id="PTHR11995:SF14">
    <property type="entry name" value="NADH DEHYDROGENASE [UBIQUINONE] IRON-SULFUR PROTEIN 7, MITOCHONDRIAL"/>
    <property type="match status" value="1"/>
</dbReference>
<dbReference type="Pfam" id="PF01058">
    <property type="entry name" value="Oxidored_q6"/>
    <property type="match status" value="1"/>
</dbReference>
<dbReference type="SUPFAM" id="SSF56770">
    <property type="entry name" value="HydA/Nqo6-like"/>
    <property type="match status" value="1"/>
</dbReference>
<dbReference type="PROSITE" id="PS01150">
    <property type="entry name" value="COMPLEX1_20K"/>
    <property type="match status" value="1"/>
</dbReference>
<evidence type="ECO:0000250" key="1"/>
<evidence type="ECO:0000255" key="2">
    <source>
        <dbReference type="HAMAP-Rule" id="MF_01356"/>
    </source>
</evidence>
<name>NUOB_BORA1</name>
<proteinExistence type="inferred from homology"/>
<sequence length="158" mass="17425">MAIDGILKQGFITTSADKFINWAKTGSMWPMTFGLACCAVEMMHAGAARYDLDQFGIIFRPSPRQSDLMIVAGTLCNKMGPALRKVYDQMPEPRWVVSMGSCANGGGYYHYSYSVVRGCDRIVPVDVYVPGCPPTAEALVYGLLQMQNKIRLTNTIAR</sequence>
<gene>
    <name evidence="2" type="primary">nuoB</name>
    <name type="ordered locus">BAV1043</name>
</gene>
<accession>Q2KV17</accession>
<reference key="1">
    <citation type="journal article" date="2006" name="J. Bacteriol.">
        <title>Comparison of the genome sequence of the poultry pathogen Bordetella avium with those of B. bronchiseptica, B. pertussis, and B. parapertussis reveals extensive diversity in surface structures associated with host interaction.</title>
        <authorList>
            <person name="Sebaihia M."/>
            <person name="Preston A."/>
            <person name="Maskell D.J."/>
            <person name="Kuzmiak H."/>
            <person name="Connell T.D."/>
            <person name="King N.D."/>
            <person name="Orndorff P.E."/>
            <person name="Miyamoto D.M."/>
            <person name="Thomson N.R."/>
            <person name="Harris D."/>
            <person name="Goble A."/>
            <person name="Lord A."/>
            <person name="Murphy L."/>
            <person name="Quail M.A."/>
            <person name="Rutter S."/>
            <person name="Squares R."/>
            <person name="Squares S."/>
            <person name="Woodward J."/>
            <person name="Parkhill J."/>
            <person name="Temple L.M."/>
        </authorList>
    </citation>
    <scope>NUCLEOTIDE SEQUENCE [LARGE SCALE GENOMIC DNA]</scope>
    <source>
        <strain>197N</strain>
    </source>
</reference>
<comment type="function">
    <text evidence="1">NDH-1 shuttles electrons from NADH, via FMN and iron-sulfur (Fe-S) centers, to quinones in the respiratory chain. Couples the redox reaction to proton translocation (for every two electrons transferred, four hydrogen ions are translocated across the cytoplasmic membrane), and thus conserves the redox energy in a proton gradient (By similarity).</text>
</comment>
<comment type="catalytic activity">
    <reaction evidence="2">
        <text>a quinone + NADH + 5 H(+)(in) = a quinol + NAD(+) + 4 H(+)(out)</text>
        <dbReference type="Rhea" id="RHEA:57888"/>
        <dbReference type="ChEBI" id="CHEBI:15378"/>
        <dbReference type="ChEBI" id="CHEBI:24646"/>
        <dbReference type="ChEBI" id="CHEBI:57540"/>
        <dbReference type="ChEBI" id="CHEBI:57945"/>
        <dbReference type="ChEBI" id="CHEBI:132124"/>
    </reaction>
</comment>
<comment type="cofactor">
    <cofactor evidence="2">
        <name>[4Fe-4S] cluster</name>
        <dbReference type="ChEBI" id="CHEBI:49883"/>
    </cofactor>
    <text evidence="2">Binds 1 [4Fe-4S] cluster.</text>
</comment>
<comment type="subunit">
    <text evidence="2">NDH-1 is composed of 14 different subunits. Subunits NuoB, C, D, E, F, and G constitute the peripheral sector of the complex.</text>
</comment>
<comment type="subcellular location">
    <subcellularLocation>
        <location evidence="2">Cell inner membrane</location>
        <topology evidence="2">Peripheral membrane protein</topology>
        <orientation evidence="2">Cytoplasmic side</orientation>
    </subcellularLocation>
</comment>
<comment type="similarity">
    <text evidence="2">Belongs to the complex I 20 kDa subunit family.</text>
</comment>
<organism>
    <name type="scientific">Bordetella avium (strain 197N)</name>
    <dbReference type="NCBI Taxonomy" id="360910"/>
    <lineage>
        <taxon>Bacteria</taxon>
        <taxon>Pseudomonadati</taxon>
        <taxon>Pseudomonadota</taxon>
        <taxon>Betaproteobacteria</taxon>
        <taxon>Burkholderiales</taxon>
        <taxon>Alcaligenaceae</taxon>
        <taxon>Bordetella</taxon>
    </lineage>
</organism>
<protein>
    <recommendedName>
        <fullName evidence="2">NADH-quinone oxidoreductase subunit B</fullName>
        <ecNumber evidence="2">7.1.1.-</ecNumber>
    </recommendedName>
    <alternativeName>
        <fullName evidence="2">NADH dehydrogenase I subunit B</fullName>
    </alternativeName>
    <alternativeName>
        <fullName evidence="2">NDH-1 subunit B</fullName>
    </alternativeName>
</protein>
<keyword id="KW-0004">4Fe-4S</keyword>
<keyword id="KW-0997">Cell inner membrane</keyword>
<keyword id="KW-1003">Cell membrane</keyword>
<keyword id="KW-0408">Iron</keyword>
<keyword id="KW-0411">Iron-sulfur</keyword>
<keyword id="KW-0472">Membrane</keyword>
<keyword id="KW-0479">Metal-binding</keyword>
<keyword id="KW-0520">NAD</keyword>
<keyword id="KW-0874">Quinone</keyword>
<keyword id="KW-1185">Reference proteome</keyword>
<keyword id="KW-1278">Translocase</keyword>
<keyword id="KW-0813">Transport</keyword>
<keyword id="KW-0830">Ubiquinone</keyword>